<protein>
    <recommendedName>
        <fullName evidence="3">Receptor-like protein 35</fullName>
        <shortName evidence="3">AtRLP35</shortName>
    </recommendedName>
</protein>
<name>RLP35_ARATH</name>
<sequence>MTGSWNPTSIIIPVTLSFLLSFIHNFADVVAAPTRHLCLPEQRDALLELKNEFEIGKPSSNDYCYRNNSRVSPHPTTESWRNNSDCCNWEGITCDTKSGEVIELDLSCSWLYGSFHSNSSLFRLQNLRVLDLTQNDLDGEIPSSIGNLSHLTSLHLSYNQFLGLIPSSIENLSRLTSLHLSSNQFSGQIPSSIGNLSHLTSLELSSNQFSGQIPSSIGNLSNLTFLSLPSNDFFGQIPSSIGNLARLTYLYLSYNNFVGEIPSSFGNLNQLIVLQVDSNKLSGNVPISLLNLTRLSALLLSHNQFTGTIPNNISLLSNLMDFEASNNAFTGTLPSSLFNIPPLIRLDLSDNQLNGTLHFGNISSPSNLQYLIIGSNNFIGTIPRSLSRFVNLTLFDLSHLNTQCRPVDFSIFSHLKSLDDLRLSYLTTTTIDLNDILPYFKTLRSLDISGNLVSATNKSSVSSDPPSQSIQSLYLSGCGITDFPEILRTQHELGFLDVSNNKIKGQVPGWLWTLPNLFYLNLSNNTFISFESSSKKHGLSSVRKPSMIHLFASNNNFTGKIPSFICGLRSLNTLDLSENNYNGSIPRCMEKLKSTLFVLNLRQNNLSGGLPKHIFESLRSLDVGHNLLVGKLPRSLIRFSNLEVLNVESNRINDTFPFWLSSLSKLQVLVLRSNAFHGPIHEATFPELRIIDISHNHFNGTLPTEYFVKWSAMSSLGKNEDQSNEKYMGSGLYYQDSMVLMNKGLAMELVRILTIYTALDFSGNKFEGEIPKSIGLLKELLVLNLSNNAFGGHIPSSMGNLTALESLDVSQNKLTGEIPQELGDLSFLAYMNFSHNQLAGLVPGGTQFRRQNCSAFENNLGLFGPSLDEVCRDKHTPASQQNETTETEEEDEEEISWIAAAIGFIPGIVFGLTIGYILVSYKPEWFMNPFGRNNRRRRNTTTH</sequence>
<feature type="signal peptide" evidence="1">
    <location>
        <begin position="1"/>
        <end position="31"/>
    </location>
</feature>
<feature type="chain" id="PRO_5013536853" description="Receptor-like protein 35">
    <location>
        <begin position="32"/>
        <end position="943"/>
    </location>
</feature>
<feature type="topological domain" description="Extracellular" evidence="1">
    <location>
        <begin position="32"/>
        <end position="897"/>
    </location>
</feature>
<feature type="transmembrane region" description="Helical" evidence="1">
    <location>
        <begin position="898"/>
        <end position="918"/>
    </location>
</feature>
<feature type="topological domain" description="Cytoplasmic" evidence="1">
    <location>
        <begin position="919"/>
        <end position="943"/>
    </location>
</feature>
<feature type="repeat" description="LRR 1" evidence="1">
    <location>
        <begin position="124"/>
        <end position="148"/>
    </location>
</feature>
<feature type="repeat" description="LRR 2" evidence="1">
    <location>
        <begin position="150"/>
        <end position="171"/>
    </location>
</feature>
<feature type="repeat" description="LRR 3" evidence="1">
    <location>
        <begin position="172"/>
        <end position="196"/>
    </location>
</feature>
<feature type="repeat" description="LRR 4" evidence="1">
    <location>
        <begin position="198"/>
        <end position="220"/>
    </location>
</feature>
<feature type="repeat" description="LRR 5" evidence="1">
    <location>
        <begin position="222"/>
        <end position="244"/>
    </location>
</feature>
<feature type="repeat" description="LRR 6" evidence="1">
    <location>
        <begin position="245"/>
        <end position="267"/>
    </location>
</feature>
<feature type="repeat" description="LRR 7" evidence="1">
    <location>
        <begin position="268"/>
        <end position="292"/>
    </location>
</feature>
<feature type="repeat" description="LRR 8" evidence="1">
    <location>
        <begin position="293"/>
        <end position="317"/>
    </location>
</feature>
<feature type="repeat" description="LRR 9" evidence="1">
    <location>
        <begin position="319"/>
        <end position="340"/>
    </location>
</feature>
<feature type="repeat" description="LRR 10" evidence="1">
    <location>
        <begin position="341"/>
        <end position="364"/>
    </location>
</feature>
<feature type="repeat" description="LRR 11" evidence="1">
    <location>
        <begin position="366"/>
        <end position="389"/>
    </location>
</feature>
<feature type="repeat" description="LRR 12; degenerate" evidence="4">
    <location>
        <begin position="390"/>
        <end position="414"/>
    </location>
</feature>
<feature type="repeat" description="LRR 13" evidence="1">
    <location>
        <begin position="415"/>
        <end position="439"/>
    </location>
</feature>
<feature type="repeat" description="LRR 14" evidence="1">
    <location>
        <begin position="440"/>
        <end position="463"/>
    </location>
</feature>
<feature type="repeat" description="LRR 15" evidence="1">
    <location>
        <begin position="467"/>
        <end position="490"/>
    </location>
</feature>
<feature type="repeat" description="LRR 16" evidence="1">
    <location>
        <begin position="491"/>
        <end position="514"/>
    </location>
</feature>
<feature type="repeat" description="LRR 17" evidence="1">
    <location>
        <begin position="515"/>
        <end position="537"/>
    </location>
</feature>
<feature type="repeat" description="LRR 18" evidence="1">
    <location>
        <begin position="544"/>
        <end position="568"/>
    </location>
</feature>
<feature type="repeat" description="LRR 19" evidence="1">
    <location>
        <begin position="569"/>
        <end position="592"/>
    </location>
</feature>
<feature type="repeat" description="LRR 20" evidence="1">
    <location>
        <begin position="593"/>
        <end position="617"/>
    </location>
</feature>
<feature type="repeat" description="LRR 21" evidence="1">
    <location>
        <begin position="619"/>
        <end position="639"/>
    </location>
</feature>
<feature type="repeat" description="LRR 22" evidence="1">
    <location>
        <begin position="640"/>
        <end position="665"/>
    </location>
</feature>
<feature type="repeat" description="LRR 23" evidence="1">
    <location>
        <begin position="667"/>
        <end position="685"/>
    </location>
</feature>
<feature type="repeat" description="LRR 24" evidence="1">
    <location>
        <begin position="686"/>
        <end position="709"/>
    </location>
</feature>
<feature type="repeat" description="LRR 25" evidence="1">
    <location>
        <begin position="753"/>
        <end position="777"/>
    </location>
</feature>
<feature type="repeat" description="LRR 26" evidence="1">
    <location>
        <begin position="778"/>
        <end position="801"/>
    </location>
</feature>
<feature type="repeat" description="LRR 27" evidence="1">
    <location>
        <begin position="802"/>
        <end position="825"/>
    </location>
</feature>
<feature type="repeat" description="LRR 28" evidence="1">
    <location>
        <begin position="827"/>
        <end position="850"/>
    </location>
</feature>
<feature type="glycosylation site" description="N-linked (GlcNAc...) asparagine" evidence="2">
    <location>
        <position position="67"/>
    </location>
</feature>
<feature type="glycosylation site" description="N-linked (GlcNAc...) asparagine" evidence="2">
    <location>
        <position position="82"/>
    </location>
</feature>
<feature type="glycosylation site" description="N-linked (GlcNAc...) asparagine" evidence="2">
    <location>
        <position position="118"/>
    </location>
</feature>
<feature type="glycosylation site" description="N-linked (GlcNAc...) asparagine" evidence="2">
    <location>
        <position position="147"/>
    </location>
</feature>
<feature type="glycosylation site" description="N-linked (GlcNAc...) asparagine" evidence="2">
    <location>
        <position position="171"/>
    </location>
</feature>
<feature type="glycosylation site" description="N-linked (GlcNAc...) asparagine" evidence="2">
    <location>
        <position position="195"/>
    </location>
</feature>
<feature type="glycosylation site" description="N-linked (GlcNAc...) asparagine" evidence="2">
    <location>
        <position position="219"/>
    </location>
</feature>
<feature type="glycosylation site" description="N-linked (GlcNAc...) asparagine" evidence="2">
    <location>
        <position position="222"/>
    </location>
</feature>
<feature type="glycosylation site" description="N-linked (GlcNAc...) asparagine" evidence="2">
    <location>
        <position position="291"/>
    </location>
</feature>
<feature type="glycosylation site" description="N-linked (GlcNAc...) asparagine" evidence="2">
    <location>
        <position position="312"/>
    </location>
</feature>
<feature type="glycosylation site" description="N-linked (GlcNAc...) asparagine" evidence="2">
    <location>
        <position position="354"/>
    </location>
</feature>
<feature type="glycosylation site" description="N-linked (GlcNAc...) asparagine" evidence="2">
    <location>
        <position position="361"/>
    </location>
</feature>
<feature type="glycosylation site" description="N-linked (GlcNAc...) asparagine" evidence="2">
    <location>
        <position position="391"/>
    </location>
</feature>
<feature type="glycosylation site" description="N-linked (GlcNAc...) asparagine" evidence="2">
    <location>
        <position position="457"/>
    </location>
</feature>
<feature type="glycosylation site" description="N-linked (GlcNAc...) asparagine" evidence="2">
    <location>
        <position position="521"/>
    </location>
</feature>
<feature type="glycosylation site" description="N-linked (GlcNAc...) asparagine" evidence="2">
    <location>
        <position position="524"/>
    </location>
</feature>
<feature type="glycosylation site" description="N-linked (GlcNAc...) asparagine" evidence="2">
    <location>
        <position position="556"/>
    </location>
</feature>
<feature type="glycosylation site" description="N-linked (GlcNAc...) asparagine" evidence="2">
    <location>
        <position position="582"/>
    </location>
</feature>
<feature type="glycosylation site" description="N-linked (GlcNAc...) asparagine" evidence="2">
    <location>
        <position position="605"/>
    </location>
</feature>
<feature type="glycosylation site" description="N-linked (GlcNAc...) asparagine" evidence="2">
    <location>
        <position position="653"/>
    </location>
</feature>
<feature type="glycosylation site" description="N-linked (GlcNAc...) asparagine" evidence="2">
    <location>
        <position position="699"/>
    </location>
</feature>
<feature type="glycosylation site" description="N-linked (GlcNAc...) asparagine" evidence="2">
    <location>
        <position position="784"/>
    </location>
</feature>
<feature type="glycosylation site" description="N-linked (GlcNAc...) asparagine" evidence="2">
    <location>
        <position position="800"/>
    </location>
</feature>
<feature type="glycosylation site" description="N-linked (GlcNAc...) asparagine" evidence="2">
    <location>
        <position position="832"/>
    </location>
</feature>
<feature type="glycosylation site" description="N-linked (GlcNAc...) asparagine" evidence="2">
    <location>
        <position position="852"/>
    </location>
</feature>
<feature type="glycosylation site" description="N-linked (GlcNAc...) asparagine" evidence="2">
    <location>
        <position position="882"/>
    </location>
</feature>
<dbReference type="EMBL" id="AC009991">
    <property type="protein sequence ID" value="AAF01514.1"/>
    <property type="molecule type" value="Genomic_DNA"/>
</dbReference>
<dbReference type="EMBL" id="AC073395">
    <property type="protein sequence ID" value="AAG50981.1"/>
    <property type="molecule type" value="Genomic_DNA"/>
</dbReference>
<dbReference type="EMBL" id="CP002686">
    <property type="protein sequence ID" value="AEE75000.1"/>
    <property type="molecule type" value="Genomic_DNA"/>
</dbReference>
<dbReference type="EMBL" id="CP002686">
    <property type="protein sequence ID" value="ANM65812.1"/>
    <property type="molecule type" value="Genomic_DNA"/>
</dbReference>
<dbReference type="RefSeq" id="NP_001319521.1">
    <property type="nucleotide sequence ID" value="NM_001337913.1"/>
</dbReference>
<dbReference type="RefSeq" id="NP_187719.1">
    <property type="nucleotide sequence ID" value="NM_111945.2"/>
</dbReference>
<dbReference type="SMR" id="Q9SRL7"/>
<dbReference type="FunCoup" id="Q9SRL7">
    <property type="interactions" value="30"/>
</dbReference>
<dbReference type="STRING" id="3702.Q9SRL7"/>
<dbReference type="GlyCosmos" id="Q9SRL7">
    <property type="glycosylation" value="26 sites, No reported glycans"/>
</dbReference>
<dbReference type="GlyGen" id="Q9SRL7">
    <property type="glycosylation" value="26 sites"/>
</dbReference>
<dbReference type="PaxDb" id="3702-AT3G11080.1"/>
<dbReference type="EnsemblPlants" id="AT3G11080.1">
    <property type="protein sequence ID" value="AT3G11080.1"/>
    <property type="gene ID" value="AT3G11080"/>
</dbReference>
<dbReference type="EnsemblPlants" id="AT3G11080.2">
    <property type="protein sequence ID" value="AT3G11080.2"/>
    <property type="gene ID" value="AT3G11080"/>
</dbReference>
<dbReference type="GeneID" id="820279"/>
<dbReference type="Gramene" id="AT3G11080.1">
    <property type="protein sequence ID" value="AT3G11080.1"/>
    <property type="gene ID" value="AT3G11080"/>
</dbReference>
<dbReference type="Gramene" id="AT3G11080.2">
    <property type="protein sequence ID" value="AT3G11080.2"/>
    <property type="gene ID" value="AT3G11080"/>
</dbReference>
<dbReference type="KEGG" id="ath:AT3G11080"/>
<dbReference type="Araport" id="AT3G11080"/>
<dbReference type="TAIR" id="AT3G11080">
    <property type="gene designation" value="RLP35"/>
</dbReference>
<dbReference type="eggNOG" id="KOG0619">
    <property type="taxonomic scope" value="Eukaryota"/>
</dbReference>
<dbReference type="HOGENOM" id="CLU_000288_18_3_1"/>
<dbReference type="InParanoid" id="Q9SRL7"/>
<dbReference type="OMA" id="NTGFIQW"/>
<dbReference type="PhylomeDB" id="Q9SRL7"/>
<dbReference type="PRO" id="PR:Q9SRL7"/>
<dbReference type="Proteomes" id="UP000006548">
    <property type="component" value="Chromosome 3"/>
</dbReference>
<dbReference type="ExpressionAtlas" id="Q9SRL7">
    <property type="expression patterns" value="baseline and differential"/>
</dbReference>
<dbReference type="GO" id="GO:0005886">
    <property type="term" value="C:plasma membrane"/>
    <property type="evidence" value="ECO:0007669"/>
    <property type="project" value="UniProtKB-SubCell"/>
</dbReference>
<dbReference type="FunFam" id="3.80.10.10:FF:000275">
    <property type="entry name" value="Leucine-rich repeat receptor-like protein kinase"/>
    <property type="match status" value="1"/>
</dbReference>
<dbReference type="FunFam" id="3.80.10.10:FF:000111">
    <property type="entry name" value="LRR receptor-like serine/threonine-protein kinase ERECTA"/>
    <property type="match status" value="1"/>
</dbReference>
<dbReference type="FunFam" id="3.80.10.10:FF:000095">
    <property type="entry name" value="LRR receptor-like serine/threonine-protein kinase GSO1"/>
    <property type="match status" value="1"/>
</dbReference>
<dbReference type="FunFam" id="3.80.10.10:FF:000299">
    <property type="entry name" value="Piriformospora indica-insensitive protein 2"/>
    <property type="match status" value="1"/>
</dbReference>
<dbReference type="Gene3D" id="3.80.10.10">
    <property type="entry name" value="Ribonuclease Inhibitor"/>
    <property type="match status" value="3"/>
</dbReference>
<dbReference type="InterPro" id="IPR001611">
    <property type="entry name" value="Leu-rich_rpt"/>
</dbReference>
<dbReference type="InterPro" id="IPR003591">
    <property type="entry name" value="Leu-rich_rpt_typical-subtyp"/>
</dbReference>
<dbReference type="InterPro" id="IPR032675">
    <property type="entry name" value="LRR_dom_sf"/>
</dbReference>
<dbReference type="InterPro" id="IPR013210">
    <property type="entry name" value="LRR_N_plant-typ"/>
</dbReference>
<dbReference type="InterPro" id="IPR055414">
    <property type="entry name" value="LRR_R13L4/SHOC2-like"/>
</dbReference>
<dbReference type="PANTHER" id="PTHR27004:SF203">
    <property type="entry name" value="LEUCINE-RICH REPEAT-CONTAINING N-TERMINAL PLANT-TYPE DOMAIN-CONTAINING PROTEIN"/>
    <property type="match status" value="1"/>
</dbReference>
<dbReference type="PANTHER" id="PTHR27004">
    <property type="entry name" value="RECEPTOR-LIKE PROTEIN 12 ISOFORM X1"/>
    <property type="match status" value="1"/>
</dbReference>
<dbReference type="Pfam" id="PF00560">
    <property type="entry name" value="LRR_1"/>
    <property type="match status" value="3"/>
</dbReference>
<dbReference type="Pfam" id="PF23598">
    <property type="entry name" value="LRR_14"/>
    <property type="match status" value="2"/>
</dbReference>
<dbReference type="Pfam" id="PF13855">
    <property type="entry name" value="LRR_8"/>
    <property type="match status" value="2"/>
</dbReference>
<dbReference type="Pfam" id="PF08263">
    <property type="entry name" value="LRRNT_2"/>
    <property type="match status" value="2"/>
</dbReference>
<dbReference type="PRINTS" id="PR00019">
    <property type="entry name" value="LEURICHRPT"/>
</dbReference>
<dbReference type="SMART" id="SM00365">
    <property type="entry name" value="LRR_SD22"/>
    <property type="match status" value="5"/>
</dbReference>
<dbReference type="SMART" id="SM00369">
    <property type="entry name" value="LRR_TYP"/>
    <property type="match status" value="11"/>
</dbReference>
<dbReference type="SUPFAM" id="SSF52058">
    <property type="entry name" value="L domain-like"/>
    <property type="match status" value="1"/>
</dbReference>
<dbReference type="SUPFAM" id="SSF52047">
    <property type="entry name" value="RNI-like"/>
    <property type="match status" value="1"/>
</dbReference>
<accession>Q9SRL7</accession>
<comment type="subcellular location">
    <subcellularLocation>
        <location evidence="4">Cell membrane</location>
        <topology evidence="4">Single-pass type I membrane protein</topology>
    </subcellularLocation>
</comment>
<comment type="similarity">
    <text evidence="4">Belongs to the RLP family.</text>
</comment>
<gene>
    <name evidence="3" type="primary">RLP35</name>
    <name evidence="5" type="ordered locus">At3g11080</name>
    <name evidence="7" type="ORF">F11B9.4</name>
    <name evidence="6" type="ORF">F9F8.11</name>
</gene>
<organism>
    <name type="scientific">Arabidopsis thaliana</name>
    <name type="common">Mouse-ear cress</name>
    <dbReference type="NCBI Taxonomy" id="3702"/>
    <lineage>
        <taxon>Eukaryota</taxon>
        <taxon>Viridiplantae</taxon>
        <taxon>Streptophyta</taxon>
        <taxon>Embryophyta</taxon>
        <taxon>Tracheophyta</taxon>
        <taxon>Spermatophyta</taxon>
        <taxon>Magnoliopsida</taxon>
        <taxon>eudicotyledons</taxon>
        <taxon>Gunneridae</taxon>
        <taxon>Pentapetalae</taxon>
        <taxon>rosids</taxon>
        <taxon>malvids</taxon>
        <taxon>Brassicales</taxon>
        <taxon>Brassicaceae</taxon>
        <taxon>Camelineae</taxon>
        <taxon>Arabidopsis</taxon>
    </lineage>
</organism>
<proteinExistence type="inferred from homology"/>
<reference key="1">
    <citation type="journal article" date="2000" name="Nature">
        <title>Sequence and analysis of chromosome 3 of the plant Arabidopsis thaliana.</title>
        <authorList>
            <person name="Salanoubat M."/>
            <person name="Lemcke K."/>
            <person name="Rieger M."/>
            <person name="Ansorge W."/>
            <person name="Unseld M."/>
            <person name="Fartmann B."/>
            <person name="Valle G."/>
            <person name="Bloecker H."/>
            <person name="Perez-Alonso M."/>
            <person name="Obermaier B."/>
            <person name="Delseny M."/>
            <person name="Boutry M."/>
            <person name="Grivell L.A."/>
            <person name="Mache R."/>
            <person name="Puigdomenech P."/>
            <person name="De Simone V."/>
            <person name="Choisne N."/>
            <person name="Artiguenave F."/>
            <person name="Robert C."/>
            <person name="Brottier P."/>
            <person name="Wincker P."/>
            <person name="Cattolico L."/>
            <person name="Weissenbach J."/>
            <person name="Saurin W."/>
            <person name="Quetier F."/>
            <person name="Schaefer M."/>
            <person name="Mueller-Auer S."/>
            <person name="Gabel C."/>
            <person name="Fuchs M."/>
            <person name="Benes V."/>
            <person name="Wurmbach E."/>
            <person name="Drzonek H."/>
            <person name="Erfle H."/>
            <person name="Jordan N."/>
            <person name="Bangert S."/>
            <person name="Wiedelmann R."/>
            <person name="Kranz H."/>
            <person name="Voss H."/>
            <person name="Holland R."/>
            <person name="Brandt P."/>
            <person name="Nyakatura G."/>
            <person name="Vezzi A."/>
            <person name="D'Angelo M."/>
            <person name="Pallavicini A."/>
            <person name="Toppo S."/>
            <person name="Simionati B."/>
            <person name="Conrad A."/>
            <person name="Hornischer K."/>
            <person name="Kauer G."/>
            <person name="Loehnert T.-H."/>
            <person name="Nordsiek G."/>
            <person name="Reichelt J."/>
            <person name="Scharfe M."/>
            <person name="Schoen O."/>
            <person name="Bargues M."/>
            <person name="Terol J."/>
            <person name="Climent J."/>
            <person name="Navarro P."/>
            <person name="Collado C."/>
            <person name="Perez-Perez A."/>
            <person name="Ottenwaelder B."/>
            <person name="Duchemin D."/>
            <person name="Cooke R."/>
            <person name="Laudie M."/>
            <person name="Berger-Llauro C."/>
            <person name="Purnelle B."/>
            <person name="Masuy D."/>
            <person name="de Haan M."/>
            <person name="Maarse A.C."/>
            <person name="Alcaraz J.-P."/>
            <person name="Cottet A."/>
            <person name="Casacuberta E."/>
            <person name="Monfort A."/>
            <person name="Argiriou A."/>
            <person name="Flores M."/>
            <person name="Liguori R."/>
            <person name="Vitale D."/>
            <person name="Mannhaupt G."/>
            <person name="Haase D."/>
            <person name="Schoof H."/>
            <person name="Rudd S."/>
            <person name="Zaccaria P."/>
            <person name="Mewes H.-W."/>
            <person name="Mayer K.F.X."/>
            <person name="Kaul S."/>
            <person name="Town C.D."/>
            <person name="Koo H.L."/>
            <person name="Tallon L.J."/>
            <person name="Jenkins J."/>
            <person name="Rooney T."/>
            <person name="Rizzo M."/>
            <person name="Walts A."/>
            <person name="Utterback T."/>
            <person name="Fujii C.Y."/>
            <person name="Shea T.P."/>
            <person name="Creasy T.H."/>
            <person name="Haas B."/>
            <person name="Maiti R."/>
            <person name="Wu D."/>
            <person name="Peterson J."/>
            <person name="Van Aken S."/>
            <person name="Pai G."/>
            <person name="Militscher J."/>
            <person name="Sellers P."/>
            <person name="Gill J.E."/>
            <person name="Feldblyum T.V."/>
            <person name="Preuss D."/>
            <person name="Lin X."/>
            <person name="Nierman W.C."/>
            <person name="Salzberg S.L."/>
            <person name="White O."/>
            <person name="Venter J.C."/>
            <person name="Fraser C.M."/>
            <person name="Kaneko T."/>
            <person name="Nakamura Y."/>
            <person name="Sato S."/>
            <person name="Kato T."/>
            <person name="Asamizu E."/>
            <person name="Sasamoto S."/>
            <person name="Kimura T."/>
            <person name="Idesawa K."/>
            <person name="Kawashima K."/>
            <person name="Kishida Y."/>
            <person name="Kiyokawa C."/>
            <person name="Kohara M."/>
            <person name="Matsumoto M."/>
            <person name="Matsuno A."/>
            <person name="Muraki A."/>
            <person name="Nakayama S."/>
            <person name="Nakazaki N."/>
            <person name="Shinpo S."/>
            <person name="Takeuchi C."/>
            <person name="Wada T."/>
            <person name="Watanabe A."/>
            <person name="Yamada M."/>
            <person name="Yasuda M."/>
            <person name="Tabata S."/>
        </authorList>
    </citation>
    <scope>NUCLEOTIDE SEQUENCE [LARGE SCALE GENOMIC DNA]</scope>
    <source>
        <strain>cv. Columbia</strain>
    </source>
</reference>
<reference key="2">
    <citation type="journal article" date="2017" name="Plant J.">
        <title>Araport11: a complete reannotation of the Arabidopsis thaliana reference genome.</title>
        <authorList>
            <person name="Cheng C.Y."/>
            <person name="Krishnakumar V."/>
            <person name="Chan A.P."/>
            <person name="Thibaud-Nissen F."/>
            <person name="Schobel S."/>
            <person name="Town C.D."/>
        </authorList>
    </citation>
    <scope>GENOME REANNOTATION</scope>
    <source>
        <strain>cv. Columbia</strain>
    </source>
</reference>
<reference key="3">
    <citation type="journal article" date="2005" name="Plant Physiol.">
        <title>Phylogenomic analysis of the receptor-like proteins of rice and Arabidopsis.</title>
        <authorList>
            <person name="Fritz-Laylin L.K."/>
            <person name="Krishnamurthy N."/>
            <person name="Toer M."/>
            <person name="Sjoelander K.V."/>
            <person name="Jones J.D."/>
        </authorList>
    </citation>
    <scope>GENE FAMILY</scope>
</reference>
<reference key="4">
    <citation type="journal article" date="2008" name="Plant Physiol.">
        <title>A genome-wide functional investigation into the roles of receptor-like proteins in Arabidopsis.</title>
        <authorList>
            <person name="Wang G."/>
            <person name="Ellendorff U."/>
            <person name="Kemp B."/>
            <person name="Mansfield J.W."/>
            <person name="Forsyth A."/>
            <person name="Mitchell K."/>
            <person name="Bastas K."/>
            <person name="Liu C.-M."/>
            <person name="Woods-Toer A."/>
            <person name="Zipfel C."/>
            <person name="de Wit P.J.G.M."/>
            <person name="Jones J.D.G."/>
            <person name="Toer M."/>
            <person name="Thomma B.P.H.J."/>
        </authorList>
    </citation>
    <scope>GENE FAMILY</scope>
    <scope>NOMENCLATURE</scope>
    <source>
        <strain>cv. Columbia</strain>
    </source>
</reference>
<evidence type="ECO:0000255" key="1"/>
<evidence type="ECO:0000255" key="2">
    <source>
        <dbReference type="PROSITE-ProRule" id="PRU00498"/>
    </source>
</evidence>
<evidence type="ECO:0000303" key="3">
    <source>
    </source>
</evidence>
<evidence type="ECO:0000305" key="4"/>
<evidence type="ECO:0000312" key="5">
    <source>
        <dbReference type="Araport" id="AT3G11080"/>
    </source>
</evidence>
<evidence type="ECO:0000312" key="6">
    <source>
        <dbReference type="EMBL" id="AAF01514.1"/>
    </source>
</evidence>
<evidence type="ECO:0000312" key="7">
    <source>
        <dbReference type="EMBL" id="AAG50981.1"/>
    </source>
</evidence>
<keyword id="KW-1003">Cell membrane</keyword>
<keyword id="KW-0325">Glycoprotein</keyword>
<keyword id="KW-0433">Leucine-rich repeat</keyword>
<keyword id="KW-0472">Membrane</keyword>
<keyword id="KW-0675">Receptor</keyword>
<keyword id="KW-1185">Reference proteome</keyword>
<keyword id="KW-0677">Repeat</keyword>
<keyword id="KW-0732">Signal</keyword>
<keyword id="KW-0812">Transmembrane</keyword>
<keyword id="KW-1133">Transmembrane helix</keyword>